<reference key="1">
    <citation type="journal article" date="1996" name="Microbiology">
        <title>Gene arrangement and organization in an approximately 76 kb fragment encompassing the oriC region of the chromosome of Mycobacterium leprae.</title>
        <authorList>
            <person name="Fsihi H."/>
            <person name="de Rossi E."/>
            <person name="Salazar L."/>
            <person name="Cantoni R."/>
            <person name="Labo M."/>
            <person name="Riccardi G."/>
            <person name="Takiff H.E."/>
            <person name="Eiglmeier K."/>
            <person name="Bergh S."/>
            <person name="Cole S.T."/>
        </authorList>
    </citation>
    <scope>NUCLEOTIDE SEQUENCE [GENOMIC DNA]</scope>
</reference>
<reference key="2">
    <citation type="journal article" date="2001" name="Nature">
        <title>Massive gene decay in the leprosy bacillus.</title>
        <authorList>
            <person name="Cole S.T."/>
            <person name="Eiglmeier K."/>
            <person name="Parkhill J."/>
            <person name="James K.D."/>
            <person name="Thomson N.R."/>
            <person name="Wheeler P.R."/>
            <person name="Honore N."/>
            <person name="Garnier T."/>
            <person name="Churcher C.M."/>
            <person name="Harris D.E."/>
            <person name="Mungall K.L."/>
            <person name="Basham D."/>
            <person name="Brown D."/>
            <person name="Chillingworth T."/>
            <person name="Connor R."/>
            <person name="Davies R.M."/>
            <person name="Devlin K."/>
            <person name="Duthoy S."/>
            <person name="Feltwell T."/>
            <person name="Fraser A."/>
            <person name="Hamlin N."/>
            <person name="Holroyd S."/>
            <person name="Hornsby T."/>
            <person name="Jagels K."/>
            <person name="Lacroix C."/>
            <person name="Maclean J."/>
            <person name="Moule S."/>
            <person name="Murphy L.D."/>
            <person name="Oliver K."/>
            <person name="Quail M.A."/>
            <person name="Rajandream M.A."/>
            <person name="Rutherford K.M."/>
            <person name="Rutter S."/>
            <person name="Seeger K."/>
            <person name="Simon S."/>
            <person name="Simmonds M."/>
            <person name="Skelton J."/>
            <person name="Squares R."/>
            <person name="Squares S."/>
            <person name="Stevens K."/>
            <person name="Taylor K."/>
            <person name="Whitehead S."/>
            <person name="Woodward J.R."/>
            <person name="Barrell B.G."/>
        </authorList>
    </citation>
    <scope>NUCLEOTIDE SEQUENCE [LARGE SCALE GENOMIC DNA]</scope>
    <source>
        <strain>TN</strain>
    </source>
</reference>
<protein>
    <recommendedName>
        <fullName>Membrane protein insertase YidC</fullName>
    </recommendedName>
    <alternativeName>
        <fullName>Foldase YidC</fullName>
    </alternativeName>
    <alternativeName>
        <fullName>Membrane integrase YidC</fullName>
    </alternativeName>
    <alternativeName>
        <fullName>Membrane protein YidC</fullName>
    </alternativeName>
</protein>
<organism>
    <name type="scientific">Mycobacterium leprae (strain TN)</name>
    <dbReference type="NCBI Taxonomy" id="272631"/>
    <lineage>
        <taxon>Bacteria</taxon>
        <taxon>Bacillati</taxon>
        <taxon>Actinomycetota</taxon>
        <taxon>Actinomycetes</taxon>
        <taxon>Mycobacteriales</taxon>
        <taxon>Mycobacteriaceae</taxon>
        <taxon>Mycobacterium</taxon>
    </lineage>
</organism>
<accession>Q50205</accession>
<accession>Q9CCX6</accession>
<proteinExistence type="inferred from homology"/>
<feature type="chain" id="PRO_0000124725" description="Membrane protein insertase YidC">
    <location>
        <begin position="1"/>
        <end position="380"/>
    </location>
</feature>
<feature type="transmembrane region" description="Helical" evidence="2">
    <location>
        <begin position="4"/>
        <end position="24"/>
    </location>
</feature>
<feature type="transmembrane region" description="Helical" evidence="2">
    <location>
        <begin position="29"/>
        <end position="49"/>
    </location>
</feature>
<feature type="transmembrane region" description="Helical" evidence="2">
    <location>
        <begin position="107"/>
        <end position="127"/>
    </location>
</feature>
<feature type="transmembrane region" description="Helical" evidence="2">
    <location>
        <begin position="192"/>
        <end position="212"/>
    </location>
</feature>
<feature type="transmembrane region" description="Helical" evidence="2">
    <location>
        <begin position="238"/>
        <end position="258"/>
    </location>
</feature>
<feature type="region of interest" description="Disordered" evidence="3">
    <location>
        <begin position="287"/>
        <end position="308"/>
    </location>
</feature>
<feature type="region of interest" description="Disordered" evidence="3">
    <location>
        <begin position="326"/>
        <end position="380"/>
    </location>
</feature>
<feature type="compositionally biased region" description="Basic residues" evidence="3">
    <location>
        <begin position="367"/>
        <end position="380"/>
    </location>
</feature>
<feature type="sequence conflict" description="In Ref. 1; AAB53138." evidence="4" ref="1">
    <original>MQ</original>
    <variation>IE</variation>
    <location>
        <begin position="70"/>
        <end position="71"/>
    </location>
</feature>
<dbReference type="EMBL" id="L39923">
    <property type="protein sequence ID" value="AAB53138.1"/>
    <property type="status" value="ALT_FRAME"/>
    <property type="molecule type" value="Genomic_DNA"/>
</dbReference>
<dbReference type="EMBL" id="AL583926">
    <property type="protein sequence ID" value="CAC32242.1"/>
    <property type="molecule type" value="Genomic_DNA"/>
</dbReference>
<dbReference type="PIR" id="D87248">
    <property type="entry name" value="D87248"/>
</dbReference>
<dbReference type="RefSeq" id="NP_302731.1">
    <property type="nucleotide sequence ID" value="NC_002677.1"/>
</dbReference>
<dbReference type="RefSeq" id="WP_010909049.1">
    <property type="nucleotide sequence ID" value="NC_002677.1"/>
</dbReference>
<dbReference type="STRING" id="272631.gene:17576576"/>
<dbReference type="KEGG" id="mle:ML2710"/>
<dbReference type="PATRIC" id="fig|272631.5.peg.5213"/>
<dbReference type="Leproma" id="ML2710"/>
<dbReference type="eggNOG" id="COG0706">
    <property type="taxonomic scope" value="Bacteria"/>
</dbReference>
<dbReference type="HOGENOM" id="CLU_036138_3_0_11"/>
<dbReference type="OrthoDB" id="9780552at2"/>
<dbReference type="Proteomes" id="UP000000806">
    <property type="component" value="Chromosome"/>
</dbReference>
<dbReference type="GO" id="GO:0005886">
    <property type="term" value="C:plasma membrane"/>
    <property type="evidence" value="ECO:0007669"/>
    <property type="project" value="UniProtKB-SubCell"/>
</dbReference>
<dbReference type="GO" id="GO:0032977">
    <property type="term" value="F:membrane insertase activity"/>
    <property type="evidence" value="ECO:0007669"/>
    <property type="project" value="InterPro"/>
</dbReference>
<dbReference type="GO" id="GO:0051205">
    <property type="term" value="P:protein insertion into membrane"/>
    <property type="evidence" value="ECO:0007669"/>
    <property type="project" value="TreeGrafter"/>
</dbReference>
<dbReference type="GO" id="GO:0015031">
    <property type="term" value="P:protein transport"/>
    <property type="evidence" value="ECO:0007669"/>
    <property type="project" value="UniProtKB-KW"/>
</dbReference>
<dbReference type="CDD" id="cd20070">
    <property type="entry name" value="5TM_YidC_Alb3"/>
    <property type="match status" value="1"/>
</dbReference>
<dbReference type="InterPro" id="IPR001708">
    <property type="entry name" value="YidC/ALB3/OXA1/COX18"/>
</dbReference>
<dbReference type="InterPro" id="IPR028055">
    <property type="entry name" value="YidC/Oxa/ALB_C"/>
</dbReference>
<dbReference type="InterPro" id="IPR047196">
    <property type="entry name" value="YidC_ALB_C"/>
</dbReference>
<dbReference type="NCBIfam" id="NF002899">
    <property type="entry name" value="PRK03449.1"/>
    <property type="match status" value="1"/>
</dbReference>
<dbReference type="NCBIfam" id="TIGR03592">
    <property type="entry name" value="yidC_oxa1_cterm"/>
    <property type="match status" value="1"/>
</dbReference>
<dbReference type="PANTHER" id="PTHR12428:SF65">
    <property type="entry name" value="CYTOCHROME C OXIDASE ASSEMBLY PROTEIN COX18, MITOCHONDRIAL"/>
    <property type="match status" value="1"/>
</dbReference>
<dbReference type="PANTHER" id="PTHR12428">
    <property type="entry name" value="OXA1"/>
    <property type="match status" value="1"/>
</dbReference>
<dbReference type="Pfam" id="PF02096">
    <property type="entry name" value="60KD_IMP"/>
    <property type="match status" value="1"/>
</dbReference>
<sequence length="380" mass="42879">MSLLPFDFVSLDIVYYPVSWIMWVWYKLFAAVLGPSNFFAWALSVMFLVFTLRALLYKPFVRQIRTTRQMQELQPRIRALQRKYGKDRQRMALEMQKLQREHGFNPILGCLPMLAQIPVFLGLYHALRSFNRTTGGFGQPHMSVTENRMTGNYVFTPVDVGHFLDANLWGAPIGAYMTQRSGLDAFIDFSRPAVILVGIPMMVLAGVATYFNSRASIARQSAEAAENPQTALMNKIALYVFPFGVVVGGPFLPLAIILYWFSNNIWTFGQQHYVFSMIEKEDEAKKQKAIERRTANAPAPGSKPKYVSTTAPVSVNGFSKDTMISDDGAKLGSQEADSIDWVTETKTATTPADKPDCVGYNNNPTSHTRRSGQRTKRRKR</sequence>
<evidence type="ECO:0000250" key="1"/>
<evidence type="ECO:0000255" key="2"/>
<evidence type="ECO:0000256" key="3">
    <source>
        <dbReference type="SAM" id="MobiDB-lite"/>
    </source>
</evidence>
<evidence type="ECO:0000305" key="4"/>
<name>YIDC_MYCLE</name>
<comment type="function">
    <text evidence="1">Required for the insertion and/or proper folding and/or complex formation of integral membrane proteins into the membrane. Involved in integration of membrane proteins that insert both dependently and independently of the Sec translocase complex, as well as at least some lipoproteins. Aids folding of multispanning membrane proteins (By similarity).</text>
</comment>
<comment type="subunit">
    <text evidence="1">Interacts with the Sec translocase complex via SecD. Specifically interacts with transmembrane segments of nascent integral membrane proteins during membrane integration (By similarity).</text>
</comment>
<comment type="subcellular location">
    <subcellularLocation>
        <location evidence="1">Cell membrane</location>
        <topology evidence="1">Multi-pass membrane protein</topology>
    </subcellularLocation>
</comment>
<comment type="similarity">
    <text evidence="4">Belongs to the OXA1/ALB3/YidC family. Type 1 subfamily.</text>
</comment>
<comment type="sequence caution" evidence="4">
    <conflict type="frameshift">
        <sequence resource="EMBL-CDS" id="AAB53138"/>
    </conflict>
</comment>
<gene>
    <name type="primary">yidC</name>
    <name type="ordered locus">ML2710</name>
</gene>
<keyword id="KW-1003">Cell membrane</keyword>
<keyword id="KW-0143">Chaperone</keyword>
<keyword id="KW-0472">Membrane</keyword>
<keyword id="KW-0653">Protein transport</keyword>
<keyword id="KW-1185">Reference proteome</keyword>
<keyword id="KW-0812">Transmembrane</keyword>
<keyword id="KW-1133">Transmembrane helix</keyword>
<keyword id="KW-0813">Transport</keyword>